<organism>
    <name type="scientific">Chaetomium globosum (strain ATCC 6205 / CBS 148.51 / DSM 1962 / NBRC 6347 / NRRL 1970)</name>
    <name type="common">Soil fungus</name>
    <dbReference type="NCBI Taxonomy" id="306901"/>
    <lineage>
        <taxon>Eukaryota</taxon>
        <taxon>Fungi</taxon>
        <taxon>Dikarya</taxon>
        <taxon>Ascomycota</taxon>
        <taxon>Pezizomycotina</taxon>
        <taxon>Sordariomycetes</taxon>
        <taxon>Sordariomycetidae</taxon>
        <taxon>Sordariales</taxon>
        <taxon>Chaetomiaceae</taxon>
        <taxon>Chaetomium</taxon>
    </lineage>
</organism>
<evidence type="ECO:0000250" key="1"/>
<evidence type="ECO:0000250" key="2">
    <source>
        <dbReference type="UniProtKB" id="Q969G6"/>
    </source>
</evidence>
<evidence type="ECO:0000305" key="3"/>
<sequence>MAHQPPNRPPLIGDPSGPAPPYPFRMSGLVISGFGRGSKELGIPTANLPVDDAQTPWISSIPSGVYFGWASLNLPASHPDSLTSSAAAAAAAAAAAAAPGEDGGGAGEQRQRGGNGFAVYPMVMSIGYNPFYKNTVRSAEVHVLHRFGADFYGVEMRLLIAGFIREEKDYSGLEALIADIEFDCEVAKRSLAREGWAPSGVDVEVDVPGEGVKVLRGSLECGWLIRPDELGEGGK</sequence>
<protein>
    <recommendedName>
        <fullName>Riboflavin kinase</fullName>
        <ecNumber>2.7.1.26</ecNumber>
    </recommendedName>
    <alternativeName>
        <fullName>Flavin mononucleotide kinase 1</fullName>
    </alternativeName>
</protein>
<gene>
    <name type="primary">FMN1</name>
    <name type="ORF">CHGG_09149.2</name>
</gene>
<keyword id="KW-0067">ATP-binding</keyword>
<keyword id="KW-0285">Flavoprotein</keyword>
<keyword id="KW-0288">FMN</keyword>
<keyword id="KW-0418">Kinase</keyword>
<keyword id="KW-0460">Magnesium</keyword>
<keyword id="KW-0479">Metal-binding</keyword>
<keyword id="KW-0547">Nucleotide-binding</keyword>
<keyword id="KW-1185">Reference proteome</keyword>
<keyword id="KW-0808">Transferase</keyword>
<keyword id="KW-0862">Zinc</keyword>
<proteinExistence type="inferred from homology"/>
<name>RIFK_CHAGB</name>
<dbReference type="EC" id="2.7.1.26"/>
<dbReference type="EMBL" id="CH408034">
    <property type="protein sequence ID" value="EAQ85135.1"/>
    <property type="status" value="ALT_SEQ"/>
    <property type="molecule type" value="Genomic_DNA"/>
</dbReference>
<dbReference type="RefSeq" id="XP_001227076.1">
    <property type="nucleotide sequence ID" value="XM_001227075.1"/>
</dbReference>
<dbReference type="SMR" id="P0C5D9"/>
<dbReference type="FunCoup" id="P0C5D9">
    <property type="interactions" value="339"/>
</dbReference>
<dbReference type="STRING" id="306901.P0C5D9"/>
<dbReference type="VEuPathDB" id="FungiDB:CHGG_09149"/>
<dbReference type="eggNOG" id="KOG3110">
    <property type="taxonomic scope" value="Eukaryota"/>
</dbReference>
<dbReference type="eggNOG" id="KOG4039">
    <property type="taxonomic scope" value="Eukaryota"/>
</dbReference>
<dbReference type="HOGENOM" id="CLU_599913_0_0_1"/>
<dbReference type="InParanoid" id="P0C5D9"/>
<dbReference type="OrthoDB" id="276388at2759"/>
<dbReference type="UniPathway" id="UPA00276">
    <property type="reaction ID" value="UER00406"/>
</dbReference>
<dbReference type="Proteomes" id="UP000001056">
    <property type="component" value="Unassembled WGS sequence"/>
</dbReference>
<dbReference type="GO" id="GO:0005739">
    <property type="term" value="C:mitochondrion"/>
    <property type="evidence" value="ECO:0007669"/>
    <property type="project" value="TreeGrafter"/>
</dbReference>
<dbReference type="GO" id="GO:0005524">
    <property type="term" value="F:ATP binding"/>
    <property type="evidence" value="ECO:0007669"/>
    <property type="project" value="UniProtKB-KW"/>
</dbReference>
<dbReference type="GO" id="GO:0046872">
    <property type="term" value="F:metal ion binding"/>
    <property type="evidence" value="ECO:0007669"/>
    <property type="project" value="UniProtKB-KW"/>
</dbReference>
<dbReference type="GO" id="GO:0008531">
    <property type="term" value="F:riboflavin kinase activity"/>
    <property type="evidence" value="ECO:0007669"/>
    <property type="project" value="UniProtKB-EC"/>
</dbReference>
<dbReference type="GO" id="GO:0009398">
    <property type="term" value="P:FMN biosynthetic process"/>
    <property type="evidence" value="ECO:0007669"/>
    <property type="project" value="UniProtKB-UniPathway"/>
</dbReference>
<dbReference type="GO" id="GO:0009231">
    <property type="term" value="P:riboflavin biosynthetic process"/>
    <property type="evidence" value="ECO:0007669"/>
    <property type="project" value="InterPro"/>
</dbReference>
<dbReference type="Gene3D" id="2.40.30.30">
    <property type="entry name" value="Riboflavin kinase-like"/>
    <property type="match status" value="1"/>
</dbReference>
<dbReference type="InterPro" id="IPR023468">
    <property type="entry name" value="Riboflavin_kinase"/>
</dbReference>
<dbReference type="InterPro" id="IPR015865">
    <property type="entry name" value="Riboflavin_kinase_bac/euk"/>
</dbReference>
<dbReference type="InterPro" id="IPR023465">
    <property type="entry name" value="Riboflavin_kinase_dom_sf"/>
</dbReference>
<dbReference type="PANTHER" id="PTHR22749:SF6">
    <property type="entry name" value="RIBOFLAVIN KINASE"/>
    <property type="match status" value="1"/>
</dbReference>
<dbReference type="PANTHER" id="PTHR22749">
    <property type="entry name" value="RIBOFLAVIN KINASE/FMN ADENYLYLTRANSFERASE"/>
    <property type="match status" value="1"/>
</dbReference>
<dbReference type="Pfam" id="PF01687">
    <property type="entry name" value="Flavokinase"/>
    <property type="match status" value="1"/>
</dbReference>
<dbReference type="SMART" id="SM00904">
    <property type="entry name" value="Flavokinase"/>
    <property type="match status" value="1"/>
</dbReference>
<dbReference type="SUPFAM" id="SSF82114">
    <property type="entry name" value="Riboflavin kinase-like"/>
    <property type="match status" value="1"/>
</dbReference>
<reference key="1">
    <citation type="journal article" date="2015" name="Genome Announc.">
        <title>Draft genome sequence of the cellulolytic fungus Chaetomium globosum.</title>
        <authorList>
            <person name="Cuomo C.A."/>
            <person name="Untereiner W.A."/>
            <person name="Ma L.-J."/>
            <person name="Grabherr M."/>
            <person name="Birren B.W."/>
        </authorList>
    </citation>
    <scope>NUCLEOTIDE SEQUENCE [LARGE SCALE GENOMIC DNA]</scope>
    <source>
        <strain>ATCC 6205 / CBS 148.51 / DSM 1962 / NBRC 6347 / NRRL 1970</strain>
    </source>
</reference>
<comment type="function">
    <text evidence="1">Catalyzes the phosphorylation of riboflavin (vitamin B2) to form flavin mononucleotide (FMN) coenzyme.</text>
</comment>
<comment type="catalytic activity">
    <reaction>
        <text>riboflavin + ATP = FMN + ADP + H(+)</text>
        <dbReference type="Rhea" id="RHEA:14357"/>
        <dbReference type="ChEBI" id="CHEBI:15378"/>
        <dbReference type="ChEBI" id="CHEBI:30616"/>
        <dbReference type="ChEBI" id="CHEBI:57986"/>
        <dbReference type="ChEBI" id="CHEBI:58210"/>
        <dbReference type="ChEBI" id="CHEBI:456216"/>
        <dbReference type="EC" id="2.7.1.26"/>
    </reaction>
</comment>
<comment type="cofactor">
    <cofactor evidence="1">
        <name>Zn(2+)</name>
        <dbReference type="ChEBI" id="CHEBI:29105"/>
    </cofactor>
    <cofactor evidence="1">
        <name>Mg(2+)</name>
        <dbReference type="ChEBI" id="CHEBI:18420"/>
    </cofactor>
    <text evidence="1">Zinc or magnesium.</text>
</comment>
<comment type="pathway">
    <text>Cofactor biosynthesis; FMN biosynthesis; FMN from riboflavin (ATP route): step 1/1.</text>
</comment>
<comment type="similarity">
    <text evidence="3">Belongs to the flavokinase family.</text>
</comment>
<comment type="sequence caution" evidence="3">
    <conflict type="erroneous gene model prediction">
        <sequence resource="EMBL-CDS" id="EAQ85135"/>
    </conflict>
    <text>The predicted gene CHGG_09149 has been split into 2 genes: CHGG_09149.1 and CHGG_09149.2.</text>
</comment>
<feature type="chain" id="PRO_0000301839" description="Riboflavin kinase">
    <location>
        <begin position="1"/>
        <end position="235"/>
    </location>
</feature>
<feature type="active site" description="Nucleophile" evidence="1">
    <location>
        <position position="140"/>
    </location>
</feature>
<feature type="binding site" evidence="2">
    <location>
        <position position="45"/>
    </location>
    <ligand>
        <name>Mg(2+)</name>
        <dbReference type="ChEBI" id="CHEBI:18420"/>
    </ligand>
</feature>
<feature type="binding site" evidence="2">
    <location>
        <position position="47"/>
    </location>
    <ligand>
        <name>Mg(2+)</name>
        <dbReference type="ChEBI" id="CHEBI:18420"/>
    </ligand>
</feature>
<accession>P0C5D9</accession>
<accession>Q2GSA5</accession>